<comment type="function">
    <text>Involved in disruption of the peritrophic membrane and fusion of nucleocapsids with midgut cells.</text>
</comment>
<accession>P29998</accession>
<reference key="1">
    <citation type="journal article" date="1991" name="J. Gen. Virol.">
        <title>Location and nucleotide sequence of the gene encoding the viral enhancing factor of the Trichoplusia ni granulosis virus.</title>
        <authorList>
            <person name="Hashimoto Y."/>
            <person name="Corsaro B.G."/>
            <person name="Granados R.R."/>
        </authorList>
    </citation>
    <scope>NUCLEOTIDE SEQUENCE [GENOMIC DNA]</scope>
</reference>
<proteinExistence type="predicted"/>
<organismHost>
    <name type="scientific">Trichoplusia ni</name>
    <name type="common">Cabbage looper</name>
    <dbReference type="NCBI Taxonomy" id="7111"/>
</organismHost>
<organism>
    <name type="scientific">Trichoplusia ni granulosis virus</name>
    <name type="common">TnGV</name>
    <name type="synonym">Trichoplusia ni granulovirus</name>
    <dbReference type="NCBI Taxonomy" id="10462"/>
    <lineage>
        <taxon>Viruses</taxon>
        <taxon>Viruses incertae sedis</taxon>
        <taxon>Naldaviricetes</taxon>
        <taxon>Lefavirales</taxon>
        <taxon>Baculoviridae</taxon>
        <taxon>Betabaculovirus</taxon>
        <taxon>Betabaculovirus trini</taxon>
    </lineage>
</organism>
<evidence type="ECO:0000255" key="1"/>
<evidence type="ECO:0000255" key="2">
    <source>
        <dbReference type="PROSITE-ProRule" id="PRU01060"/>
    </source>
</evidence>
<feature type="chain" id="PRO_0000132866" description="Viral-enhancing factor">
    <location>
        <begin position="1"/>
        <end position="901"/>
    </location>
</feature>
<feature type="domain" description="Peptidase M60" evidence="2">
    <location>
        <begin position="27"/>
        <end position="330"/>
    </location>
</feature>
<feature type="glycosylation site" description="N-linked (GlcNAc...) asparagine; by host" evidence="1">
    <location>
        <position position="65"/>
    </location>
</feature>
<feature type="glycosylation site" description="N-linked (GlcNAc...) asparagine; by host" evidence="1">
    <location>
        <position position="265"/>
    </location>
</feature>
<feature type="glycosylation site" description="N-linked (GlcNAc...) asparagine; by host" evidence="1">
    <location>
        <position position="339"/>
    </location>
</feature>
<feature type="glycosylation site" description="N-linked (GlcNAc...) asparagine; by host" evidence="1">
    <location>
        <position position="349"/>
    </location>
</feature>
<feature type="glycosylation site" description="N-linked (GlcNAc...) asparagine; by host" evidence="1">
    <location>
        <position position="540"/>
    </location>
</feature>
<feature type="glycosylation site" description="N-linked (GlcNAc...) asparagine; by host" evidence="1">
    <location>
        <position position="594"/>
    </location>
</feature>
<feature type="glycosylation site" description="N-linked (GlcNAc...) asparagine; by host" evidence="1">
    <location>
        <position position="595"/>
    </location>
</feature>
<feature type="glycosylation site" description="N-linked (GlcNAc...) asparagine; by host" evidence="1">
    <location>
        <position position="642"/>
    </location>
</feature>
<feature type="glycosylation site" description="N-linked (GlcNAc...) asparagine; by host" evidence="1">
    <location>
        <position position="683"/>
    </location>
</feature>
<feature type="glycosylation site" description="N-linked (GlcNAc...) asparagine; by host" evidence="1">
    <location>
        <position position="698"/>
    </location>
</feature>
<gene>
    <name type="primary">VEF</name>
</gene>
<protein>
    <recommendedName>
        <fullName>Viral-enhancing factor</fullName>
        <shortName>Enhancin</shortName>
        <shortName>VEF</shortName>
    </recommendedName>
    <alternativeName>
        <fullName>104 kDa glycoprotein</fullName>
    </alternativeName>
    <alternativeName>
        <fullName>Synergistic factor</fullName>
    </alternativeName>
</protein>
<dbReference type="EMBL" id="D12617">
    <property type="protein sequence ID" value="BAA02141.1"/>
    <property type="molecule type" value="Genomic_DNA"/>
</dbReference>
<dbReference type="PIR" id="JQ1328">
    <property type="entry name" value="WMNVTN"/>
</dbReference>
<dbReference type="MEROPS" id="M60.004"/>
<dbReference type="GlyCosmos" id="P29998">
    <property type="glycosylation" value="10 sites, No reported glycans"/>
</dbReference>
<dbReference type="Gene3D" id="3.40.390.80">
    <property type="entry name" value="Peptidase M60, enhancin-like domain 2"/>
    <property type="match status" value="1"/>
</dbReference>
<dbReference type="InterPro" id="IPR004954">
    <property type="entry name" value="Mucin-bd"/>
</dbReference>
<dbReference type="InterPro" id="IPR031161">
    <property type="entry name" value="Peptidase_M60_dom"/>
</dbReference>
<dbReference type="Pfam" id="PF03272">
    <property type="entry name" value="Mucin_bdg"/>
    <property type="match status" value="1"/>
</dbReference>
<dbReference type="Pfam" id="PF13402">
    <property type="entry name" value="Peptidase_M60"/>
    <property type="match status" value="1"/>
</dbReference>
<dbReference type="SMART" id="SM01276">
    <property type="entry name" value="M60-like"/>
    <property type="match status" value="1"/>
</dbReference>
<dbReference type="PROSITE" id="PS51723">
    <property type="entry name" value="PEPTIDASE_M60"/>
    <property type="match status" value="1"/>
</dbReference>
<sequence length="901" mass="104322">MSYKVIVPATVLPPWLRVGENWIFARHRRTEVGVVLPANTKFRVRADFSRAGFTRPVIVRLLNNNRSTEREINLNNDQWMEVEHAHESVPFVDWLVGEKNTMAEVYFEIDGPHIPLPVYVFNTRPVEHFKSEYRQSSSGYCFLYLDLVCMLVPPASKNALLDVNIFELHQFYNEIINYYDDLCGLVEDPYADTVDSNLPNKAAFVKADAGGPGGAYYGPFWTAPASSNLGDYLRISPTNWMVIHELGHAYDFVFTVNTILIEIWNNSLCDRIQYKWMNKIKRQQLARVYENRRPQKEATIQALIDNNSPFDNWGFFERLIIFTWLYNPQRGLDTLRNINHSYRVHATRNSSIPYPQIWSWLTTSAYDNFWLYFNLVGVYPADFYVNEHNKVVHFNLHLRALALGQSVRYPIKYIITDFDLVSKNYDIKQYLESNFDLVIPEELRQTDLLADVRVVCVIDDPSQIVGEPFSVYDGNERVFESTVATDGNMYLVGVGPGVYTLRAPRGKNKRYKLHLAHSPREPVHPANDHMYLLVTYPYYNQTLTYTPYVNSDLAVDMAHLFGSNDRRYVATIYFNPFEQTVTVHLNNIRAGRENNTTLYFEMVISNPFNGQSQTFTILEDNPTLRQGYYKFDVVTYSSIRLNMSVAGRLLFRRYIFAGGTTTLTMFPNQVLEPNLFPDGSALNRTLARLREQAAFLDNYSQLMYIENELRDTIYLASQLVDPASDEFVKYYPDYFRDPHTYVYLFRFRGLGDFVLLDLQIVPLLNLATVRIANIQNGPHSYFDTLYFKVELRDTNGAIVFSYSRRGNEPMTPEHHKFEVYSGYTVELFMREPGNRLQLIVNKMLDTALPSTQNIFARITDTQLVVGDTSIEDNLVTSINVDCGDDDNQKIRVVETLKMIAF</sequence>
<name>VEF_GVTN</name>
<keyword id="KW-0325">Glycoprotein</keyword>
<keyword id="KW-0426">Late protein</keyword>